<accession>Q1QD97</accession>
<sequence length="207" mass="22406">MSAFNLSAIAFILAAIGLVVFMLVVPRLLGGRSHGSQKEEIFEAGVVGSGNARIRLSAKFYLVAIFFVIFDLEALYLYAYAVSVREAGWLGFAAAAIFITILIIGLVYELSLGAMNWAPADKLRKKARLYAAPAGFSLADITKFDGVDELMVDPTGKIPAQSSGQINVSNNIETNRRHLQNIDHINTTGNVTSVDFATSAQTDKMTR</sequence>
<gene>
    <name evidence="1" type="primary">nuoA</name>
    <name type="ordered locus">Pcryo_0573</name>
</gene>
<reference key="1">
    <citation type="submission" date="2006-03" db="EMBL/GenBank/DDBJ databases">
        <title>Complete sequence of chromosome of Psychrobacter cryohalolentis K5.</title>
        <authorList>
            <consortium name="US DOE Joint Genome Institute"/>
            <person name="Copeland A."/>
            <person name="Lucas S."/>
            <person name="Lapidus A."/>
            <person name="Barry K."/>
            <person name="Detter J.C."/>
            <person name="Glavina T."/>
            <person name="Hammon N."/>
            <person name="Israni S."/>
            <person name="Dalin E."/>
            <person name="Tice H."/>
            <person name="Pitluck S."/>
            <person name="Brettin T."/>
            <person name="Bruce D."/>
            <person name="Han C."/>
            <person name="Tapia R."/>
            <person name="Sims D.R."/>
            <person name="Gilna P."/>
            <person name="Schmutz J."/>
            <person name="Larimer F."/>
            <person name="Land M."/>
            <person name="Hauser L."/>
            <person name="Kyrpides N."/>
            <person name="Kim E."/>
            <person name="Richardson P."/>
        </authorList>
    </citation>
    <scope>NUCLEOTIDE SEQUENCE [LARGE SCALE GENOMIC DNA]</scope>
    <source>
        <strain>ATCC BAA-1226 / DSM 17306 / VKM B-2378 / K5</strain>
    </source>
</reference>
<keyword id="KW-0997">Cell inner membrane</keyword>
<keyword id="KW-1003">Cell membrane</keyword>
<keyword id="KW-0472">Membrane</keyword>
<keyword id="KW-0520">NAD</keyword>
<keyword id="KW-0874">Quinone</keyword>
<keyword id="KW-1278">Translocase</keyword>
<keyword id="KW-0812">Transmembrane</keyword>
<keyword id="KW-1133">Transmembrane helix</keyword>
<keyword id="KW-0813">Transport</keyword>
<keyword id="KW-0830">Ubiquinone</keyword>
<name>NUOA_PSYCK</name>
<dbReference type="EC" id="7.1.1.-" evidence="1"/>
<dbReference type="EMBL" id="CP000323">
    <property type="protein sequence ID" value="ABE74356.1"/>
    <property type="molecule type" value="Genomic_DNA"/>
</dbReference>
<dbReference type="RefSeq" id="WP_011512924.1">
    <property type="nucleotide sequence ID" value="NC_007969.1"/>
</dbReference>
<dbReference type="SMR" id="Q1QD97"/>
<dbReference type="STRING" id="335284.Pcryo_0573"/>
<dbReference type="KEGG" id="pcr:Pcryo_0573"/>
<dbReference type="eggNOG" id="COG0838">
    <property type="taxonomic scope" value="Bacteria"/>
</dbReference>
<dbReference type="HOGENOM" id="CLU_1486001_0_0_6"/>
<dbReference type="Proteomes" id="UP000002425">
    <property type="component" value="Chromosome"/>
</dbReference>
<dbReference type="GO" id="GO:0030964">
    <property type="term" value="C:NADH dehydrogenase complex"/>
    <property type="evidence" value="ECO:0007669"/>
    <property type="project" value="TreeGrafter"/>
</dbReference>
<dbReference type="GO" id="GO:0005886">
    <property type="term" value="C:plasma membrane"/>
    <property type="evidence" value="ECO:0007669"/>
    <property type="project" value="UniProtKB-SubCell"/>
</dbReference>
<dbReference type="GO" id="GO:0008137">
    <property type="term" value="F:NADH dehydrogenase (ubiquinone) activity"/>
    <property type="evidence" value="ECO:0007669"/>
    <property type="project" value="InterPro"/>
</dbReference>
<dbReference type="GO" id="GO:0050136">
    <property type="term" value="F:NADH:ubiquinone reductase (non-electrogenic) activity"/>
    <property type="evidence" value="ECO:0007669"/>
    <property type="project" value="UniProtKB-UniRule"/>
</dbReference>
<dbReference type="GO" id="GO:0048038">
    <property type="term" value="F:quinone binding"/>
    <property type="evidence" value="ECO:0007669"/>
    <property type="project" value="UniProtKB-KW"/>
</dbReference>
<dbReference type="Gene3D" id="1.20.58.1610">
    <property type="entry name" value="NADH:ubiquinone/plastoquinone oxidoreductase, chain 3"/>
    <property type="match status" value="1"/>
</dbReference>
<dbReference type="HAMAP" id="MF_01394">
    <property type="entry name" value="NDH1_NuoA"/>
    <property type="match status" value="1"/>
</dbReference>
<dbReference type="InterPro" id="IPR023043">
    <property type="entry name" value="NAD(P)H_OxRDtase_bac/plastid"/>
</dbReference>
<dbReference type="InterPro" id="IPR000440">
    <property type="entry name" value="NADH_UbQ/plastoQ_OxRdtase_su3"/>
</dbReference>
<dbReference type="InterPro" id="IPR038430">
    <property type="entry name" value="NDAH_ubi_oxred_su3_sf"/>
</dbReference>
<dbReference type="PANTHER" id="PTHR11058:SF21">
    <property type="entry name" value="NADH-QUINONE OXIDOREDUCTASE SUBUNIT A"/>
    <property type="match status" value="1"/>
</dbReference>
<dbReference type="PANTHER" id="PTHR11058">
    <property type="entry name" value="NADH-UBIQUINONE OXIDOREDUCTASE CHAIN 3"/>
    <property type="match status" value="1"/>
</dbReference>
<dbReference type="Pfam" id="PF00507">
    <property type="entry name" value="Oxidored_q4"/>
    <property type="match status" value="1"/>
</dbReference>
<feature type="chain" id="PRO_0000362749" description="NADH-quinone oxidoreductase subunit A">
    <location>
        <begin position="1"/>
        <end position="207"/>
    </location>
</feature>
<feature type="transmembrane region" description="Helical" evidence="1">
    <location>
        <begin position="6"/>
        <end position="26"/>
    </location>
</feature>
<feature type="transmembrane region" description="Helical" evidence="1">
    <location>
        <begin position="62"/>
        <end position="82"/>
    </location>
</feature>
<feature type="transmembrane region" description="Helical" evidence="1">
    <location>
        <begin position="87"/>
        <end position="107"/>
    </location>
</feature>
<protein>
    <recommendedName>
        <fullName evidence="1">NADH-quinone oxidoreductase subunit A</fullName>
        <ecNumber evidence="1">7.1.1.-</ecNumber>
    </recommendedName>
    <alternativeName>
        <fullName evidence="1">NADH dehydrogenase I subunit A</fullName>
    </alternativeName>
    <alternativeName>
        <fullName evidence="1">NDH-1 subunit A</fullName>
    </alternativeName>
    <alternativeName>
        <fullName evidence="1">NUO1</fullName>
    </alternativeName>
</protein>
<evidence type="ECO:0000255" key="1">
    <source>
        <dbReference type="HAMAP-Rule" id="MF_01394"/>
    </source>
</evidence>
<proteinExistence type="inferred from homology"/>
<organism>
    <name type="scientific">Psychrobacter cryohalolentis (strain ATCC BAA-1226 / DSM 17306 / VKM B-2378 / K5)</name>
    <dbReference type="NCBI Taxonomy" id="335284"/>
    <lineage>
        <taxon>Bacteria</taxon>
        <taxon>Pseudomonadati</taxon>
        <taxon>Pseudomonadota</taxon>
        <taxon>Gammaproteobacteria</taxon>
        <taxon>Moraxellales</taxon>
        <taxon>Moraxellaceae</taxon>
        <taxon>Psychrobacter</taxon>
    </lineage>
</organism>
<comment type="function">
    <text evidence="1">NDH-1 shuttles electrons from NADH, via FMN and iron-sulfur (Fe-S) centers, to quinones in the respiratory chain. The immediate electron acceptor for the enzyme in this species is believed to be ubiquinone. Couples the redox reaction to proton translocation (for every two electrons transferred, four hydrogen ions are translocated across the cytoplasmic membrane), and thus conserves the redox energy in a proton gradient.</text>
</comment>
<comment type="catalytic activity">
    <reaction evidence="1">
        <text>a quinone + NADH + 5 H(+)(in) = a quinol + NAD(+) + 4 H(+)(out)</text>
        <dbReference type="Rhea" id="RHEA:57888"/>
        <dbReference type="ChEBI" id="CHEBI:15378"/>
        <dbReference type="ChEBI" id="CHEBI:24646"/>
        <dbReference type="ChEBI" id="CHEBI:57540"/>
        <dbReference type="ChEBI" id="CHEBI:57945"/>
        <dbReference type="ChEBI" id="CHEBI:132124"/>
    </reaction>
</comment>
<comment type="subunit">
    <text evidence="1">NDH-1 is composed of 14 different subunits. Subunits NuoA, H, J, K, L, M, N constitute the membrane sector of the complex.</text>
</comment>
<comment type="subcellular location">
    <subcellularLocation>
        <location evidence="1">Cell inner membrane</location>
        <topology evidence="1">Multi-pass membrane protein</topology>
    </subcellularLocation>
</comment>
<comment type="similarity">
    <text evidence="1">Belongs to the complex I subunit 3 family.</text>
</comment>